<accession>Q9HJ34</accession>
<sequence length="142" mass="16196">MVRVMATGVFDIIHLGHIHYLRESKKLGDELVVVVARDSTARKNGKVPIFDENSRLKLVSELKPVDRAILGHEDDMMKTVVEVMPDIITLGYDQKFDEADLKRKLDQIGVNSRIVRISKYDGNLNSSSMVRKKIMELIGERF</sequence>
<feature type="chain" id="PRO_0000406286" description="FAD synthase">
    <location>
        <begin position="1"/>
        <end position="142"/>
    </location>
</feature>
<feature type="binding site" evidence="1">
    <location>
        <begin position="9"/>
        <end position="10"/>
    </location>
    <ligand>
        <name>ATP</name>
        <dbReference type="ChEBI" id="CHEBI:30616"/>
    </ligand>
</feature>
<feature type="binding site" evidence="1">
    <location>
        <begin position="14"/>
        <end position="17"/>
    </location>
    <ligand>
        <name>ATP</name>
        <dbReference type="ChEBI" id="CHEBI:30616"/>
    </ligand>
</feature>
<feature type="binding site" evidence="1">
    <location>
        <position position="93"/>
    </location>
    <ligand>
        <name>ATP</name>
        <dbReference type="ChEBI" id="CHEBI:30616"/>
    </ligand>
</feature>
<feature type="binding site" evidence="1">
    <location>
        <position position="120"/>
    </location>
    <ligand>
        <name>ATP</name>
        <dbReference type="ChEBI" id="CHEBI:30616"/>
    </ligand>
</feature>
<evidence type="ECO:0000255" key="1">
    <source>
        <dbReference type="HAMAP-Rule" id="MF_02115"/>
    </source>
</evidence>
<reference key="1">
    <citation type="journal article" date="2000" name="Nature">
        <title>The genome sequence of the thermoacidophilic scavenger Thermoplasma acidophilum.</title>
        <authorList>
            <person name="Ruepp A."/>
            <person name="Graml W."/>
            <person name="Santos-Martinez M.-L."/>
            <person name="Koretke K.K."/>
            <person name="Volker C."/>
            <person name="Mewes H.-W."/>
            <person name="Frishman D."/>
            <person name="Stocker S."/>
            <person name="Lupas A.N."/>
            <person name="Baumeister W."/>
        </authorList>
    </citation>
    <scope>NUCLEOTIDE SEQUENCE [LARGE SCALE GENOMIC DNA]</scope>
    <source>
        <strain>ATCC 25905 / DSM 1728 / JCM 9062 / NBRC 15155 / AMRC-C165</strain>
    </source>
</reference>
<organism>
    <name type="scientific">Thermoplasma acidophilum (strain ATCC 25905 / DSM 1728 / JCM 9062 / NBRC 15155 / AMRC-C165)</name>
    <dbReference type="NCBI Taxonomy" id="273075"/>
    <lineage>
        <taxon>Archaea</taxon>
        <taxon>Methanobacteriati</taxon>
        <taxon>Thermoplasmatota</taxon>
        <taxon>Thermoplasmata</taxon>
        <taxon>Thermoplasmatales</taxon>
        <taxon>Thermoplasmataceae</taxon>
        <taxon>Thermoplasma</taxon>
    </lineage>
</organism>
<name>RIBL_THEAC</name>
<proteinExistence type="inferred from homology"/>
<keyword id="KW-0067">ATP-binding</keyword>
<keyword id="KW-0274">FAD</keyword>
<keyword id="KW-0285">Flavoprotein</keyword>
<keyword id="KW-0288">FMN</keyword>
<keyword id="KW-0547">Nucleotide-binding</keyword>
<keyword id="KW-0548">Nucleotidyltransferase</keyword>
<keyword id="KW-1185">Reference proteome</keyword>
<keyword id="KW-0808">Transferase</keyword>
<gene>
    <name evidence="1" type="primary">ribL</name>
    <name type="ordered locus">Ta1139</name>
</gene>
<dbReference type="EC" id="2.7.7.2" evidence="1"/>
<dbReference type="EMBL" id="AL445066">
    <property type="protein sequence ID" value="CAC12265.1"/>
    <property type="molecule type" value="Genomic_DNA"/>
</dbReference>
<dbReference type="RefSeq" id="WP_010901547.1">
    <property type="nucleotide sequence ID" value="NC_002578.1"/>
</dbReference>
<dbReference type="SMR" id="Q9HJ34"/>
<dbReference type="FunCoup" id="Q9HJ34">
    <property type="interactions" value="2"/>
</dbReference>
<dbReference type="STRING" id="273075.gene:9572361"/>
<dbReference type="PaxDb" id="273075-Ta1139"/>
<dbReference type="EnsemblBacteria" id="CAC12265">
    <property type="protein sequence ID" value="CAC12265"/>
    <property type="gene ID" value="CAC12265"/>
</dbReference>
<dbReference type="KEGG" id="tac:Ta1139"/>
<dbReference type="eggNOG" id="arCOG01222">
    <property type="taxonomic scope" value="Archaea"/>
</dbReference>
<dbReference type="HOGENOM" id="CLU_034585_2_1_2"/>
<dbReference type="InParanoid" id="Q9HJ34"/>
<dbReference type="OrthoDB" id="1912at2157"/>
<dbReference type="UniPathway" id="UPA00277">
    <property type="reaction ID" value="UER00407"/>
</dbReference>
<dbReference type="Proteomes" id="UP000001024">
    <property type="component" value="Chromosome"/>
</dbReference>
<dbReference type="GO" id="GO:0005524">
    <property type="term" value="F:ATP binding"/>
    <property type="evidence" value="ECO:0007669"/>
    <property type="project" value="UniProtKB-UniRule"/>
</dbReference>
<dbReference type="GO" id="GO:0003919">
    <property type="term" value="F:FMN adenylyltransferase activity"/>
    <property type="evidence" value="ECO:0007669"/>
    <property type="project" value="UniProtKB-UniRule"/>
</dbReference>
<dbReference type="GO" id="GO:0006747">
    <property type="term" value="P:FAD biosynthetic process"/>
    <property type="evidence" value="ECO:0007669"/>
    <property type="project" value="UniProtKB-UniRule"/>
</dbReference>
<dbReference type="GO" id="GO:0046444">
    <property type="term" value="P:FMN metabolic process"/>
    <property type="evidence" value="ECO:0007669"/>
    <property type="project" value="UniProtKB-UniRule"/>
</dbReference>
<dbReference type="CDD" id="cd02170">
    <property type="entry name" value="cytidylyltransferase"/>
    <property type="match status" value="1"/>
</dbReference>
<dbReference type="Gene3D" id="3.40.50.620">
    <property type="entry name" value="HUPs"/>
    <property type="match status" value="1"/>
</dbReference>
<dbReference type="HAMAP" id="MF_02115">
    <property type="entry name" value="FAD_synth_arch"/>
    <property type="match status" value="1"/>
</dbReference>
<dbReference type="InterPro" id="IPR050385">
    <property type="entry name" value="Archaeal_FAD_synthase"/>
</dbReference>
<dbReference type="InterPro" id="IPR004821">
    <property type="entry name" value="Cyt_trans-like"/>
</dbReference>
<dbReference type="InterPro" id="IPR024902">
    <property type="entry name" value="FAD_synth_RibL"/>
</dbReference>
<dbReference type="InterPro" id="IPR014729">
    <property type="entry name" value="Rossmann-like_a/b/a_fold"/>
</dbReference>
<dbReference type="NCBIfam" id="TIGR00125">
    <property type="entry name" value="cyt_tran_rel"/>
    <property type="match status" value="1"/>
</dbReference>
<dbReference type="PANTHER" id="PTHR43793">
    <property type="entry name" value="FAD SYNTHASE"/>
    <property type="match status" value="1"/>
</dbReference>
<dbReference type="PANTHER" id="PTHR43793:SF1">
    <property type="entry name" value="FAD SYNTHASE"/>
    <property type="match status" value="1"/>
</dbReference>
<dbReference type="Pfam" id="PF01467">
    <property type="entry name" value="CTP_transf_like"/>
    <property type="match status" value="1"/>
</dbReference>
<dbReference type="SUPFAM" id="SSF52374">
    <property type="entry name" value="Nucleotidylyl transferase"/>
    <property type="match status" value="1"/>
</dbReference>
<protein>
    <recommendedName>
        <fullName evidence="1">FAD synthase</fullName>
        <ecNumber evidence="1">2.7.7.2</ecNumber>
    </recommendedName>
    <alternativeName>
        <fullName evidence="1">FMN adenylyltransferase</fullName>
    </alternativeName>
    <alternativeName>
        <fullName evidence="1">Flavin adenine dinucleotide synthase</fullName>
    </alternativeName>
</protein>
<comment type="function">
    <text evidence="1">Catalyzes the transfer of the AMP portion of ATP to flavin mononucleotide (FMN) to produce flavin adenine dinucleotide (FAD) coenzyme.</text>
</comment>
<comment type="catalytic activity">
    <reaction evidence="1">
        <text>FMN + ATP + H(+) = FAD + diphosphate</text>
        <dbReference type="Rhea" id="RHEA:17237"/>
        <dbReference type="ChEBI" id="CHEBI:15378"/>
        <dbReference type="ChEBI" id="CHEBI:30616"/>
        <dbReference type="ChEBI" id="CHEBI:33019"/>
        <dbReference type="ChEBI" id="CHEBI:57692"/>
        <dbReference type="ChEBI" id="CHEBI:58210"/>
        <dbReference type="EC" id="2.7.7.2"/>
    </reaction>
</comment>
<comment type="cofactor">
    <cofactor evidence="1">
        <name>a divalent metal cation</name>
        <dbReference type="ChEBI" id="CHEBI:60240"/>
    </cofactor>
</comment>
<comment type="pathway">
    <text evidence="1">Cofactor biosynthesis; FAD biosynthesis; FAD from FMN: step 1/1.</text>
</comment>
<comment type="subunit">
    <text evidence="1">Homodimer.</text>
</comment>
<comment type="similarity">
    <text evidence="1">Belongs to the archaeal FAD synthase family.</text>
</comment>